<protein>
    <recommendedName>
        <fullName evidence="1">Large ribosomal subunit protein uL22</fullName>
    </recommendedName>
    <alternativeName>
        <fullName evidence="2">50S ribosomal protein L22</fullName>
    </alternativeName>
</protein>
<evidence type="ECO:0000255" key="1">
    <source>
        <dbReference type="HAMAP-Rule" id="MF_01331"/>
    </source>
</evidence>
<evidence type="ECO:0000305" key="2"/>
<proteinExistence type="inferred from homology"/>
<organism>
    <name type="scientific">Picrophilus torridus (strain ATCC 700027 / DSM 9790 / JCM 10055 / NBRC 100828 / KAW 2/3)</name>
    <dbReference type="NCBI Taxonomy" id="1122961"/>
    <lineage>
        <taxon>Archaea</taxon>
        <taxon>Methanobacteriati</taxon>
        <taxon>Thermoplasmatota</taxon>
        <taxon>Thermoplasmata</taxon>
        <taxon>Thermoplasmatales</taxon>
        <taxon>Picrophilaceae</taxon>
        <taxon>Picrophilus</taxon>
    </lineage>
</organism>
<comment type="function">
    <text evidence="1">This protein binds specifically to 23S rRNA. It makes multiple contacts with different domains of the 23S rRNA in the assembled 50S subunit and ribosome.</text>
</comment>
<comment type="function">
    <text evidence="1">The globular domain of the protein is located near the polypeptide exit tunnel on the outside of the subunit, while an extended beta-hairpin is found that lines the wall of the exit tunnel in the center of the 70S ribosome.</text>
</comment>
<comment type="subunit">
    <text evidence="1">Part of the 50S ribosomal subunit.</text>
</comment>
<comment type="similarity">
    <text evidence="1">Belongs to the universal ribosomal protein uL22 family.</text>
</comment>
<name>RL22_PICTO</name>
<accession>Q6L1C2</accession>
<keyword id="KW-0687">Ribonucleoprotein</keyword>
<keyword id="KW-0689">Ribosomal protein</keyword>
<keyword id="KW-0694">RNA-binding</keyword>
<keyword id="KW-0699">rRNA-binding</keyword>
<gene>
    <name evidence="1" type="primary">rpl22</name>
    <name type="ordered locus">PTO0645</name>
</gene>
<feature type="chain" id="PRO_0000125281" description="Large ribosomal subunit protein uL22">
    <location>
        <begin position="1"/>
        <end position="149"/>
    </location>
</feature>
<reference key="1">
    <citation type="journal article" date="2004" name="Proc. Natl. Acad. Sci. U.S.A.">
        <title>Genome sequence of Picrophilus torridus and its implications for life around pH 0.</title>
        <authorList>
            <person name="Fuetterer O."/>
            <person name="Angelov A."/>
            <person name="Liesegang H."/>
            <person name="Gottschalk G."/>
            <person name="Schleper C."/>
            <person name="Schepers B."/>
            <person name="Dock C."/>
            <person name="Antranikian G."/>
            <person name="Liebl W."/>
        </authorList>
    </citation>
    <scope>NUCLEOTIDE SEQUENCE [LARGE SCALE GENOMIC DNA]</scope>
    <source>
        <strain>ATCC 700027 / DSM 9790 / JCM 10055 / NBRC 100828 / KAW 2/3</strain>
    </source>
</reference>
<dbReference type="EMBL" id="AE017261">
    <property type="protein sequence ID" value="AAT43230.1"/>
    <property type="molecule type" value="Genomic_DNA"/>
</dbReference>
<dbReference type="RefSeq" id="WP_011177446.1">
    <property type="nucleotide sequence ID" value="NC_005877.1"/>
</dbReference>
<dbReference type="SMR" id="Q6L1C2"/>
<dbReference type="FunCoup" id="Q6L1C2">
    <property type="interactions" value="164"/>
</dbReference>
<dbReference type="STRING" id="263820.PTO0645"/>
<dbReference type="PaxDb" id="263820-PTO0645"/>
<dbReference type="GeneID" id="2844615"/>
<dbReference type="KEGG" id="pto:PTO0645"/>
<dbReference type="eggNOG" id="arCOG04098">
    <property type="taxonomic scope" value="Archaea"/>
</dbReference>
<dbReference type="HOGENOM" id="CLU_083987_0_2_2"/>
<dbReference type="InParanoid" id="Q6L1C2"/>
<dbReference type="OrthoDB" id="314984at2157"/>
<dbReference type="Proteomes" id="UP000000438">
    <property type="component" value="Chromosome"/>
</dbReference>
<dbReference type="GO" id="GO:0022625">
    <property type="term" value="C:cytosolic large ribosomal subunit"/>
    <property type="evidence" value="ECO:0007669"/>
    <property type="project" value="TreeGrafter"/>
</dbReference>
<dbReference type="GO" id="GO:0019843">
    <property type="term" value="F:rRNA binding"/>
    <property type="evidence" value="ECO:0007669"/>
    <property type="project" value="UniProtKB-UniRule"/>
</dbReference>
<dbReference type="GO" id="GO:0003735">
    <property type="term" value="F:structural constituent of ribosome"/>
    <property type="evidence" value="ECO:0007669"/>
    <property type="project" value="InterPro"/>
</dbReference>
<dbReference type="GO" id="GO:0002181">
    <property type="term" value="P:cytoplasmic translation"/>
    <property type="evidence" value="ECO:0007669"/>
    <property type="project" value="TreeGrafter"/>
</dbReference>
<dbReference type="Gene3D" id="3.90.470.10">
    <property type="entry name" value="Ribosomal protein L22/L17"/>
    <property type="match status" value="1"/>
</dbReference>
<dbReference type="HAMAP" id="MF_01331_A">
    <property type="entry name" value="Ribosomal_uL22_A"/>
    <property type="match status" value="1"/>
</dbReference>
<dbReference type="InterPro" id="IPR001063">
    <property type="entry name" value="Ribosomal_uL22"/>
</dbReference>
<dbReference type="InterPro" id="IPR005721">
    <property type="entry name" value="Ribosomal_uL22_euk/arc"/>
</dbReference>
<dbReference type="InterPro" id="IPR036394">
    <property type="entry name" value="Ribosomal_uL22_sf"/>
</dbReference>
<dbReference type="NCBIfam" id="NF003260">
    <property type="entry name" value="PRK04223.1"/>
    <property type="match status" value="1"/>
</dbReference>
<dbReference type="NCBIfam" id="TIGR01038">
    <property type="entry name" value="uL22_arch_euk"/>
    <property type="match status" value="1"/>
</dbReference>
<dbReference type="PANTHER" id="PTHR11593">
    <property type="entry name" value="60S RIBOSOMAL PROTEIN L17"/>
    <property type="match status" value="1"/>
</dbReference>
<dbReference type="PANTHER" id="PTHR11593:SF10">
    <property type="entry name" value="60S RIBOSOMAL PROTEIN L17"/>
    <property type="match status" value="1"/>
</dbReference>
<dbReference type="Pfam" id="PF00237">
    <property type="entry name" value="Ribosomal_L22"/>
    <property type="match status" value="1"/>
</dbReference>
<dbReference type="SUPFAM" id="SSF54843">
    <property type="entry name" value="Ribosomal protein L22"/>
    <property type="match status" value="1"/>
</dbReference>
<sequence length="149" mass="16731">MKGYSIKEFPERSARARIREIDISLKDAVNVAHFLKGMDLDSAKNVLDNVIEKKVPVPYFRYMDSVSHRKGIGPGRYPVKAARAFKKLLEDVSANAEFKGLSDSLEIVHIAVSKGRMIKKYTPKAYGRAGAFFKDLVNLEVVVRESGEE</sequence>